<evidence type="ECO:0000255" key="1">
    <source>
        <dbReference type="HAMAP-Rule" id="MF_01227"/>
    </source>
</evidence>
<dbReference type="EC" id="6.3.4.2" evidence="1"/>
<dbReference type="EMBL" id="AE005673">
    <property type="protein sequence ID" value="AAK23696.1"/>
    <property type="molecule type" value="Genomic_DNA"/>
</dbReference>
<dbReference type="PIR" id="D87462">
    <property type="entry name" value="D87462"/>
</dbReference>
<dbReference type="RefSeq" id="NP_420528.1">
    <property type="nucleotide sequence ID" value="NC_002696.2"/>
</dbReference>
<dbReference type="RefSeq" id="WP_010919588.1">
    <property type="nucleotide sequence ID" value="NC_002696.2"/>
</dbReference>
<dbReference type="SMR" id="Q9A7K3"/>
<dbReference type="STRING" id="190650.CC_1720"/>
<dbReference type="EnsemblBacteria" id="AAK23696">
    <property type="protein sequence ID" value="AAK23696"/>
    <property type="gene ID" value="CC_1720"/>
</dbReference>
<dbReference type="KEGG" id="ccr:CC_1720"/>
<dbReference type="PATRIC" id="fig|190650.5.peg.1744"/>
<dbReference type="eggNOG" id="COG0504">
    <property type="taxonomic scope" value="Bacteria"/>
</dbReference>
<dbReference type="HOGENOM" id="CLU_011675_5_0_5"/>
<dbReference type="BioCyc" id="CAULO:CC1720-MONOMER"/>
<dbReference type="UniPathway" id="UPA00159">
    <property type="reaction ID" value="UER00277"/>
</dbReference>
<dbReference type="Proteomes" id="UP000001816">
    <property type="component" value="Chromosome"/>
</dbReference>
<dbReference type="GO" id="GO:0005829">
    <property type="term" value="C:cytosol"/>
    <property type="evidence" value="ECO:0007669"/>
    <property type="project" value="TreeGrafter"/>
</dbReference>
<dbReference type="GO" id="GO:0005524">
    <property type="term" value="F:ATP binding"/>
    <property type="evidence" value="ECO:0007669"/>
    <property type="project" value="UniProtKB-KW"/>
</dbReference>
<dbReference type="GO" id="GO:0003883">
    <property type="term" value="F:CTP synthase activity"/>
    <property type="evidence" value="ECO:0007669"/>
    <property type="project" value="UniProtKB-UniRule"/>
</dbReference>
<dbReference type="GO" id="GO:0004359">
    <property type="term" value="F:glutaminase activity"/>
    <property type="evidence" value="ECO:0007669"/>
    <property type="project" value="RHEA"/>
</dbReference>
<dbReference type="GO" id="GO:0042802">
    <property type="term" value="F:identical protein binding"/>
    <property type="evidence" value="ECO:0007669"/>
    <property type="project" value="TreeGrafter"/>
</dbReference>
<dbReference type="GO" id="GO:0046872">
    <property type="term" value="F:metal ion binding"/>
    <property type="evidence" value="ECO:0007669"/>
    <property type="project" value="UniProtKB-KW"/>
</dbReference>
<dbReference type="GO" id="GO:0044210">
    <property type="term" value="P:'de novo' CTP biosynthetic process"/>
    <property type="evidence" value="ECO:0007669"/>
    <property type="project" value="UniProtKB-UniRule"/>
</dbReference>
<dbReference type="GO" id="GO:0019856">
    <property type="term" value="P:pyrimidine nucleobase biosynthetic process"/>
    <property type="evidence" value="ECO:0007669"/>
    <property type="project" value="TreeGrafter"/>
</dbReference>
<dbReference type="CDD" id="cd03113">
    <property type="entry name" value="CTPS_N"/>
    <property type="match status" value="1"/>
</dbReference>
<dbReference type="CDD" id="cd01746">
    <property type="entry name" value="GATase1_CTP_Synthase"/>
    <property type="match status" value="1"/>
</dbReference>
<dbReference type="FunFam" id="3.40.50.300:FF:000009">
    <property type="entry name" value="CTP synthase"/>
    <property type="match status" value="1"/>
</dbReference>
<dbReference type="FunFam" id="3.40.50.880:FF:000002">
    <property type="entry name" value="CTP synthase"/>
    <property type="match status" value="1"/>
</dbReference>
<dbReference type="Gene3D" id="3.40.50.880">
    <property type="match status" value="1"/>
</dbReference>
<dbReference type="Gene3D" id="3.40.50.300">
    <property type="entry name" value="P-loop containing nucleotide triphosphate hydrolases"/>
    <property type="match status" value="1"/>
</dbReference>
<dbReference type="HAMAP" id="MF_01227">
    <property type="entry name" value="PyrG"/>
    <property type="match status" value="1"/>
</dbReference>
<dbReference type="InterPro" id="IPR029062">
    <property type="entry name" value="Class_I_gatase-like"/>
</dbReference>
<dbReference type="InterPro" id="IPR004468">
    <property type="entry name" value="CTP_synthase"/>
</dbReference>
<dbReference type="InterPro" id="IPR017456">
    <property type="entry name" value="CTP_synthase_N"/>
</dbReference>
<dbReference type="InterPro" id="IPR017926">
    <property type="entry name" value="GATASE"/>
</dbReference>
<dbReference type="InterPro" id="IPR033828">
    <property type="entry name" value="GATase1_CTP_Synthase"/>
</dbReference>
<dbReference type="InterPro" id="IPR027417">
    <property type="entry name" value="P-loop_NTPase"/>
</dbReference>
<dbReference type="NCBIfam" id="NF003792">
    <property type="entry name" value="PRK05380.1"/>
    <property type="match status" value="1"/>
</dbReference>
<dbReference type="NCBIfam" id="TIGR00337">
    <property type="entry name" value="PyrG"/>
    <property type="match status" value="1"/>
</dbReference>
<dbReference type="PANTHER" id="PTHR11550">
    <property type="entry name" value="CTP SYNTHASE"/>
    <property type="match status" value="1"/>
</dbReference>
<dbReference type="PANTHER" id="PTHR11550:SF0">
    <property type="entry name" value="CTP SYNTHASE-RELATED"/>
    <property type="match status" value="1"/>
</dbReference>
<dbReference type="Pfam" id="PF06418">
    <property type="entry name" value="CTP_synth_N"/>
    <property type="match status" value="1"/>
</dbReference>
<dbReference type="Pfam" id="PF00117">
    <property type="entry name" value="GATase"/>
    <property type="match status" value="1"/>
</dbReference>
<dbReference type="SUPFAM" id="SSF52317">
    <property type="entry name" value="Class I glutamine amidotransferase-like"/>
    <property type="match status" value="1"/>
</dbReference>
<dbReference type="SUPFAM" id="SSF52540">
    <property type="entry name" value="P-loop containing nucleoside triphosphate hydrolases"/>
    <property type="match status" value="1"/>
</dbReference>
<dbReference type="PROSITE" id="PS51273">
    <property type="entry name" value="GATASE_TYPE_1"/>
    <property type="match status" value="1"/>
</dbReference>
<accession>Q9A7K3</accession>
<feature type="chain" id="PRO_0000138173" description="CTP synthase">
    <location>
        <begin position="1"/>
        <end position="550"/>
    </location>
</feature>
<feature type="domain" description="Glutamine amidotransferase type-1" evidence="1">
    <location>
        <begin position="297"/>
        <end position="549"/>
    </location>
</feature>
<feature type="region of interest" description="Amidoligase domain" evidence="1">
    <location>
        <begin position="1"/>
        <end position="271"/>
    </location>
</feature>
<feature type="active site" description="Nucleophile; for glutamine hydrolysis" evidence="1">
    <location>
        <position position="388"/>
    </location>
</feature>
<feature type="active site" evidence="1">
    <location>
        <position position="522"/>
    </location>
</feature>
<feature type="active site" evidence="1">
    <location>
        <position position="524"/>
    </location>
</feature>
<feature type="binding site" evidence="1">
    <location>
        <position position="13"/>
    </location>
    <ligand>
        <name>CTP</name>
        <dbReference type="ChEBI" id="CHEBI:37563"/>
        <note>allosteric inhibitor</note>
    </ligand>
</feature>
<feature type="binding site" evidence="1">
    <location>
        <position position="13"/>
    </location>
    <ligand>
        <name>UTP</name>
        <dbReference type="ChEBI" id="CHEBI:46398"/>
    </ligand>
</feature>
<feature type="binding site" evidence="1">
    <location>
        <begin position="14"/>
        <end position="19"/>
    </location>
    <ligand>
        <name>ATP</name>
        <dbReference type="ChEBI" id="CHEBI:30616"/>
    </ligand>
</feature>
<feature type="binding site" evidence="1">
    <location>
        <position position="54"/>
    </location>
    <ligand>
        <name>L-glutamine</name>
        <dbReference type="ChEBI" id="CHEBI:58359"/>
    </ligand>
</feature>
<feature type="binding site" evidence="1">
    <location>
        <position position="71"/>
    </location>
    <ligand>
        <name>ATP</name>
        <dbReference type="ChEBI" id="CHEBI:30616"/>
    </ligand>
</feature>
<feature type="binding site" evidence="1">
    <location>
        <position position="71"/>
    </location>
    <ligand>
        <name>Mg(2+)</name>
        <dbReference type="ChEBI" id="CHEBI:18420"/>
    </ligand>
</feature>
<feature type="binding site" evidence="1">
    <location>
        <position position="145"/>
    </location>
    <ligand>
        <name>Mg(2+)</name>
        <dbReference type="ChEBI" id="CHEBI:18420"/>
    </ligand>
</feature>
<feature type="binding site" evidence="1">
    <location>
        <begin position="152"/>
        <end position="154"/>
    </location>
    <ligand>
        <name>CTP</name>
        <dbReference type="ChEBI" id="CHEBI:37563"/>
        <note>allosteric inhibitor</note>
    </ligand>
</feature>
<feature type="binding site" evidence="1">
    <location>
        <begin position="192"/>
        <end position="197"/>
    </location>
    <ligand>
        <name>CTP</name>
        <dbReference type="ChEBI" id="CHEBI:37563"/>
        <note>allosteric inhibitor</note>
    </ligand>
</feature>
<feature type="binding site" evidence="1">
    <location>
        <begin position="192"/>
        <end position="197"/>
    </location>
    <ligand>
        <name>UTP</name>
        <dbReference type="ChEBI" id="CHEBI:46398"/>
    </ligand>
</feature>
<feature type="binding site" evidence="1">
    <location>
        <position position="228"/>
    </location>
    <ligand>
        <name>CTP</name>
        <dbReference type="ChEBI" id="CHEBI:37563"/>
        <note>allosteric inhibitor</note>
    </ligand>
</feature>
<feature type="binding site" evidence="1">
    <location>
        <position position="228"/>
    </location>
    <ligand>
        <name>UTP</name>
        <dbReference type="ChEBI" id="CHEBI:46398"/>
    </ligand>
</feature>
<feature type="binding site" evidence="1">
    <location>
        <position position="361"/>
    </location>
    <ligand>
        <name>L-glutamine</name>
        <dbReference type="ChEBI" id="CHEBI:58359"/>
    </ligand>
</feature>
<feature type="binding site" evidence="1">
    <location>
        <begin position="389"/>
        <end position="392"/>
    </location>
    <ligand>
        <name>L-glutamine</name>
        <dbReference type="ChEBI" id="CHEBI:58359"/>
    </ligand>
</feature>
<feature type="binding site" evidence="1">
    <location>
        <position position="412"/>
    </location>
    <ligand>
        <name>L-glutamine</name>
        <dbReference type="ChEBI" id="CHEBI:58359"/>
    </ligand>
</feature>
<feature type="binding site" evidence="1">
    <location>
        <position position="477"/>
    </location>
    <ligand>
        <name>L-glutamine</name>
        <dbReference type="ChEBI" id="CHEBI:58359"/>
    </ligand>
</feature>
<keyword id="KW-0067">ATP-binding</keyword>
<keyword id="KW-0315">Glutamine amidotransferase</keyword>
<keyword id="KW-0436">Ligase</keyword>
<keyword id="KW-0460">Magnesium</keyword>
<keyword id="KW-0479">Metal-binding</keyword>
<keyword id="KW-0547">Nucleotide-binding</keyword>
<keyword id="KW-0665">Pyrimidine biosynthesis</keyword>
<keyword id="KW-1185">Reference proteome</keyword>
<sequence length="550" mass="60542">MTRYIFITGGVVSSLGKGLASAALGALLQARGYKVRLRKLDPYLNVDPGTMSPYQHGEVFVTDDGAETDLDLGHYERFTGVSATKADNITTGQIYKTIIEKERRGDYLGATVQVIPHVTNEIKDFVLSPAMDETGEKAVDFVLVEIGGTVGDIEGLPFFEAIRQLRQDLPRGQSCYVHLTLLPFIKTAGEMKTKPTQHSVKELRSIGIQPDILLCRCEQEIPPEEKRKIAQFCNVRPSAVIQAMDSSSIYAVPIDYHEQGLDAEVLDVFGMRDAPAPDLTRWKTIDDTVQHPDGEVTIAVVGKYTVLKDAYKSLIEALHHGGLANKVKVNLDWVESETFEGDEGAAAARLENAHAIMVPGGFGERGAEGKIRAAQFARERKVPYFGICFGMQMAVIETLRNVAGIKDASSSEFGPTERPVVGIMTEWIKGNETVQRRANDDLGGTMRLGAYDAVLTAGSKIAEIYGATEISERHRHRYEVNIGYVHLMEDAGLKLTGRSPNGVLPEIVERDDHPWFIGVQYHPELKSRPFAPHPLFASFIAAAKEHGRLV</sequence>
<proteinExistence type="inferred from homology"/>
<reference key="1">
    <citation type="journal article" date="2001" name="Proc. Natl. Acad. Sci. U.S.A.">
        <title>Complete genome sequence of Caulobacter crescentus.</title>
        <authorList>
            <person name="Nierman W.C."/>
            <person name="Feldblyum T.V."/>
            <person name="Laub M.T."/>
            <person name="Paulsen I.T."/>
            <person name="Nelson K.E."/>
            <person name="Eisen J.A."/>
            <person name="Heidelberg J.F."/>
            <person name="Alley M.R.K."/>
            <person name="Ohta N."/>
            <person name="Maddock J.R."/>
            <person name="Potocka I."/>
            <person name="Nelson W.C."/>
            <person name="Newton A."/>
            <person name="Stephens C."/>
            <person name="Phadke N.D."/>
            <person name="Ely B."/>
            <person name="DeBoy R.T."/>
            <person name="Dodson R.J."/>
            <person name="Durkin A.S."/>
            <person name="Gwinn M.L."/>
            <person name="Haft D.H."/>
            <person name="Kolonay J.F."/>
            <person name="Smit J."/>
            <person name="Craven M.B."/>
            <person name="Khouri H.M."/>
            <person name="Shetty J."/>
            <person name="Berry K.J."/>
            <person name="Utterback T.R."/>
            <person name="Tran K."/>
            <person name="Wolf A.M."/>
            <person name="Vamathevan J.J."/>
            <person name="Ermolaeva M.D."/>
            <person name="White O."/>
            <person name="Salzberg S.L."/>
            <person name="Venter J.C."/>
            <person name="Shapiro L."/>
            <person name="Fraser C.M."/>
        </authorList>
    </citation>
    <scope>NUCLEOTIDE SEQUENCE [LARGE SCALE GENOMIC DNA]</scope>
    <source>
        <strain>ATCC 19089 / CIP 103742 / CB 15</strain>
    </source>
</reference>
<name>PYRG_CAUVC</name>
<protein>
    <recommendedName>
        <fullName evidence="1">CTP synthase</fullName>
        <ecNumber evidence="1">6.3.4.2</ecNumber>
    </recommendedName>
    <alternativeName>
        <fullName evidence="1">Cytidine 5'-triphosphate synthase</fullName>
    </alternativeName>
    <alternativeName>
        <fullName evidence="1">Cytidine triphosphate synthetase</fullName>
        <shortName evidence="1">CTP synthetase</shortName>
        <shortName evidence="1">CTPS</shortName>
    </alternativeName>
    <alternativeName>
        <fullName evidence="1">UTP--ammonia ligase</fullName>
    </alternativeName>
</protein>
<organism>
    <name type="scientific">Caulobacter vibrioides (strain ATCC 19089 / CIP 103742 / CB 15)</name>
    <name type="common">Caulobacter crescentus</name>
    <dbReference type="NCBI Taxonomy" id="190650"/>
    <lineage>
        <taxon>Bacteria</taxon>
        <taxon>Pseudomonadati</taxon>
        <taxon>Pseudomonadota</taxon>
        <taxon>Alphaproteobacteria</taxon>
        <taxon>Caulobacterales</taxon>
        <taxon>Caulobacteraceae</taxon>
        <taxon>Caulobacter</taxon>
    </lineage>
</organism>
<gene>
    <name evidence="1" type="primary">pyrG</name>
    <name type="ordered locus">CC_1720</name>
</gene>
<comment type="function">
    <text evidence="1">Catalyzes the ATP-dependent amination of UTP to CTP with either L-glutamine or ammonia as the source of nitrogen. Regulates intracellular CTP levels through interactions with the four ribonucleotide triphosphates.</text>
</comment>
<comment type="catalytic activity">
    <reaction evidence="1">
        <text>UTP + L-glutamine + ATP + H2O = CTP + L-glutamate + ADP + phosphate + 2 H(+)</text>
        <dbReference type="Rhea" id="RHEA:26426"/>
        <dbReference type="ChEBI" id="CHEBI:15377"/>
        <dbReference type="ChEBI" id="CHEBI:15378"/>
        <dbReference type="ChEBI" id="CHEBI:29985"/>
        <dbReference type="ChEBI" id="CHEBI:30616"/>
        <dbReference type="ChEBI" id="CHEBI:37563"/>
        <dbReference type="ChEBI" id="CHEBI:43474"/>
        <dbReference type="ChEBI" id="CHEBI:46398"/>
        <dbReference type="ChEBI" id="CHEBI:58359"/>
        <dbReference type="ChEBI" id="CHEBI:456216"/>
        <dbReference type="EC" id="6.3.4.2"/>
    </reaction>
</comment>
<comment type="catalytic activity">
    <reaction evidence="1">
        <text>L-glutamine + H2O = L-glutamate + NH4(+)</text>
        <dbReference type="Rhea" id="RHEA:15889"/>
        <dbReference type="ChEBI" id="CHEBI:15377"/>
        <dbReference type="ChEBI" id="CHEBI:28938"/>
        <dbReference type="ChEBI" id="CHEBI:29985"/>
        <dbReference type="ChEBI" id="CHEBI:58359"/>
    </reaction>
</comment>
<comment type="catalytic activity">
    <reaction evidence="1">
        <text>UTP + NH4(+) + ATP = CTP + ADP + phosphate + 2 H(+)</text>
        <dbReference type="Rhea" id="RHEA:16597"/>
        <dbReference type="ChEBI" id="CHEBI:15378"/>
        <dbReference type="ChEBI" id="CHEBI:28938"/>
        <dbReference type="ChEBI" id="CHEBI:30616"/>
        <dbReference type="ChEBI" id="CHEBI:37563"/>
        <dbReference type="ChEBI" id="CHEBI:43474"/>
        <dbReference type="ChEBI" id="CHEBI:46398"/>
        <dbReference type="ChEBI" id="CHEBI:456216"/>
    </reaction>
</comment>
<comment type="activity regulation">
    <text evidence="1">Allosterically activated by GTP, when glutamine is the substrate; GTP has no effect on the reaction when ammonia is the substrate. The allosteric effector GTP functions by stabilizing the protein conformation that binds the tetrahedral intermediate(s) formed during glutamine hydrolysis. Inhibited by the product CTP, via allosteric rather than competitive inhibition.</text>
</comment>
<comment type="pathway">
    <text evidence="1">Pyrimidine metabolism; CTP biosynthesis via de novo pathway; CTP from UDP: step 2/2.</text>
</comment>
<comment type="subunit">
    <text evidence="1">Homotetramer.</text>
</comment>
<comment type="miscellaneous">
    <text evidence="1">CTPSs have evolved a hybrid strategy for distinguishing between UTP and CTP. The overlapping regions of the product feedback inhibitory and substrate sites recognize a common feature in both compounds, the triphosphate moiety. To differentiate isosteric substrate and product pyrimidine rings, an additional pocket far from the expected kinase/ligase catalytic site, specifically recognizes the cytosine and ribose portions of the product inhibitor.</text>
</comment>
<comment type="similarity">
    <text evidence="1">Belongs to the CTP synthase family.</text>
</comment>